<sequence>MTSTQRTLMVMAGGTGGHVFPGLAVAHRMQAQGWRVVWLGNPAGMEATLVPRHGIPMEYVRFGGLRGKGLATKFALPFNLLRACAQSLRALRRVKPDVVLGMGGYITFPAGLVTVLTGRPLVLHEQNSIAGLTNKVLAKLAKRVLVAFPGALPNAEWTGNPIRTELARTEPPQARYAARSGKLRLLVVGGSLGAAALNEVVPRALALLAPDERPQVVHQAGAKHIDTLKENYEAAGLSCGSDVALVPFIDDMASAYANADLVICRSGAMTVAEIAAVGVAALFVPFPHAVDDHQTTNAEFLAEQGAAVLVQQRDLSAELLADWLRGQSRDSLAAMAERSRSLAKPDATDEVARVCAAVAGANQEGKQ</sequence>
<accession>A3NDW4</accession>
<organism>
    <name type="scientific">Burkholderia pseudomallei (strain 668)</name>
    <dbReference type="NCBI Taxonomy" id="320373"/>
    <lineage>
        <taxon>Bacteria</taxon>
        <taxon>Pseudomonadati</taxon>
        <taxon>Pseudomonadota</taxon>
        <taxon>Betaproteobacteria</taxon>
        <taxon>Burkholderiales</taxon>
        <taxon>Burkholderiaceae</taxon>
        <taxon>Burkholderia</taxon>
        <taxon>pseudomallei group</taxon>
    </lineage>
</organism>
<evidence type="ECO:0000255" key="1">
    <source>
        <dbReference type="HAMAP-Rule" id="MF_00033"/>
    </source>
</evidence>
<gene>
    <name evidence="1" type="primary">murG</name>
    <name type="ordered locus">BURPS668_3525</name>
</gene>
<comment type="function">
    <text evidence="1">Cell wall formation. Catalyzes the transfer of a GlcNAc subunit on undecaprenyl-pyrophosphoryl-MurNAc-pentapeptide (lipid intermediate I) to form undecaprenyl-pyrophosphoryl-MurNAc-(pentapeptide)GlcNAc (lipid intermediate II).</text>
</comment>
<comment type="catalytic activity">
    <reaction evidence="1">
        <text>di-trans,octa-cis-undecaprenyl diphospho-N-acetyl-alpha-D-muramoyl-L-alanyl-D-glutamyl-meso-2,6-diaminopimeloyl-D-alanyl-D-alanine + UDP-N-acetyl-alpha-D-glucosamine = di-trans,octa-cis-undecaprenyl diphospho-[N-acetyl-alpha-D-glucosaminyl-(1-&gt;4)]-N-acetyl-alpha-D-muramoyl-L-alanyl-D-glutamyl-meso-2,6-diaminopimeloyl-D-alanyl-D-alanine + UDP + H(+)</text>
        <dbReference type="Rhea" id="RHEA:31227"/>
        <dbReference type="ChEBI" id="CHEBI:15378"/>
        <dbReference type="ChEBI" id="CHEBI:57705"/>
        <dbReference type="ChEBI" id="CHEBI:58223"/>
        <dbReference type="ChEBI" id="CHEBI:61387"/>
        <dbReference type="ChEBI" id="CHEBI:61388"/>
        <dbReference type="EC" id="2.4.1.227"/>
    </reaction>
</comment>
<comment type="pathway">
    <text evidence="1">Cell wall biogenesis; peptidoglycan biosynthesis.</text>
</comment>
<comment type="subcellular location">
    <subcellularLocation>
        <location evidence="1">Cell inner membrane</location>
        <topology evidence="1">Peripheral membrane protein</topology>
        <orientation evidence="1">Cytoplasmic side</orientation>
    </subcellularLocation>
</comment>
<comment type="similarity">
    <text evidence="1">Belongs to the glycosyltransferase 28 family. MurG subfamily.</text>
</comment>
<proteinExistence type="inferred from homology"/>
<name>MURG_BURP6</name>
<reference key="1">
    <citation type="journal article" date="2010" name="Genome Biol. Evol.">
        <title>Continuing evolution of Burkholderia mallei through genome reduction and large-scale rearrangements.</title>
        <authorList>
            <person name="Losada L."/>
            <person name="Ronning C.M."/>
            <person name="DeShazer D."/>
            <person name="Woods D."/>
            <person name="Fedorova N."/>
            <person name="Kim H.S."/>
            <person name="Shabalina S.A."/>
            <person name="Pearson T.R."/>
            <person name="Brinkac L."/>
            <person name="Tan P."/>
            <person name="Nandi T."/>
            <person name="Crabtree J."/>
            <person name="Badger J."/>
            <person name="Beckstrom-Sternberg S."/>
            <person name="Saqib M."/>
            <person name="Schutzer S.E."/>
            <person name="Keim P."/>
            <person name="Nierman W.C."/>
        </authorList>
    </citation>
    <scope>NUCLEOTIDE SEQUENCE [LARGE SCALE GENOMIC DNA]</scope>
    <source>
        <strain>668</strain>
    </source>
</reference>
<protein>
    <recommendedName>
        <fullName evidence="1">UDP-N-acetylglucosamine--N-acetylmuramyl-(pentapeptide) pyrophosphoryl-undecaprenol N-acetylglucosamine transferase</fullName>
        <ecNumber evidence="1">2.4.1.227</ecNumber>
    </recommendedName>
    <alternativeName>
        <fullName evidence="1">Undecaprenyl-PP-MurNAc-pentapeptide-UDPGlcNAc GlcNAc transferase</fullName>
    </alternativeName>
</protein>
<feature type="chain" id="PRO_1000002627" description="UDP-N-acetylglucosamine--N-acetylmuramyl-(pentapeptide) pyrophosphoryl-undecaprenol N-acetylglucosamine transferase">
    <location>
        <begin position="1"/>
        <end position="367"/>
    </location>
</feature>
<feature type="binding site" evidence="1">
    <location>
        <begin position="15"/>
        <end position="17"/>
    </location>
    <ligand>
        <name>UDP-N-acetyl-alpha-D-glucosamine</name>
        <dbReference type="ChEBI" id="CHEBI:57705"/>
    </ligand>
</feature>
<feature type="binding site" evidence="1">
    <location>
        <position position="127"/>
    </location>
    <ligand>
        <name>UDP-N-acetyl-alpha-D-glucosamine</name>
        <dbReference type="ChEBI" id="CHEBI:57705"/>
    </ligand>
</feature>
<feature type="binding site" evidence="1">
    <location>
        <position position="163"/>
    </location>
    <ligand>
        <name>UDP-N-acetyl-alpha-D-glucosamine</name>
        <dbReference type="ChEBI" id="CHEBI:57705"/>
    </ligand>
</feature>
<feature type="binding site" evidence="1">
    <location>
        <position position="191"/>
    </location>
    <ligand>
        <name>UDP-N-acetyl-alpha-D-glucosamine</name>
        <dbReference type="ChEBI" id="CHEBI:57705"/>
    </ligand>
</feature>
<feature type="binding site" evidence="1">
    <location>
        <position position="249"/>
    </location>
    <ligand>
        <name>UDP-N-acetyl-alpha-D-glucosamine</name>
        <dbReference type="ChEBI" id="CHEBI:57705"/>
    </ligand>
</feature>
<feature type="binding site" evidence="1">
    <location>
        <position position="294"/>
    </location>
    <ligand>
        <name>UDP-N-acetyl-alpha-D-glucosamine</name>
        <dbReference type="ChEBI" id="CHEBI:57705"/>
    </ligand>
</feature>
<keyword id="KW-0131">Cell cycle</keyword>
<keyword id="KW-0132">Cell division</keyword>
<keyword id="KW-0997">Cell inner membrane</keyword>
<keyword id="KW-1003">Cell membrane</keyword>
<keyword id="KW-0133">Cell shape</keyword>
<keyword id="KW-0961">Cell wall biogenesis/degradation</keyword>
<keyword id="KW-0328">Glycosyltransferase</keyword>
<keyword id="KW-0472">Membrane</keyword>
<keyword id="KW-0573">Peptidoglycan synthesis</keyword>
<keyword id="KW-0808">Transferase</keyword>
<dbReference type="EC" id="2.4.1.227" evidence="1"/>
<dbReference type="EMBL" id="CP000570">
    <property type="protein sequence ID" value="ABN82434.1"/>
    <property type="molecule type" value="Genomic_DNA"/>
</dbReference>
<dbReference type="RefSeq" id="WP_004535266.1">
    <property type="nucleotide sequence ID" value="NC_009074.1"/>
</dbReference>
<dbReference type="SMR" id="A3NDW4"/>
<dbReference type="CAZy" id="GT28">
    <property type="family name" value="Glycosyltransferase Family 28"/>
</dbReference>
<dbReference type="KEGG" id="bpd:BURPS668_3525"/>
<dbReference type="HOGENOM" id="CLU_037404_2_0_4"/>
<dbReference type="UniPathway" id="UPA00219"/>
<dbReference type="GO" id="GO:0005886">
    <property type="term" value="C:plasma membrane"/>
    <property type="evidence" value="ECO:0007669"/>
    <property type="project" value="UniProtKB-SubCell"/>
</dbReference>
<dbReference type="GO" id="GO:0051991">
    <property type="term" value="F:UDP-N-acetyl-D-glucosamine:N-acetylmuramoyl-L-alanyl-D-glutamyl-meso-2,6-diaminopimelyl-D-alanyl-D-alanine-diphosphoundecaprenol 4-beta-N-acetylglucosaminlytransferase activity"/>
    <property type="evidence" value="ECO:0007669"/>
    <property type="project" value="RHEA"/>
</dbReference>
<dbReference type="GO" id="GO:0050511">
    <property type="term" value="F:undecaprenyldiphospho-muramoylpentapeptide beta-N-acetylglucosaminyltransferase activity"/>
    <property type="evidence" value="ECO:0007669"/>
    <property type="project" value="UniProtKB-UniRule"/>
</dbReference>
<dbReference type="GO" id="GO:0005975">
    <property type="term" value="P:carbohydrate metabolic process"/>
    <property type="evidence" value="ECO:0007669"/>
    <property type="project" value="InterPro"/>
</dbReference>
<dbReference type="GO" id="GO:0051301">
    <property type="term" value="P:cell division"/>
    <property type="evidence" value="ECO:0007669"/>
    <property type="project" value="UniProtKB-KW"/>
</dbReference>
<dbReference type="GO" id="GO:0071555">
    <property type="term" value="P:cell wall organization"/>
    <property type="evidence" value="ECO:0007669"/>
    <property type="project" value="UniProtKB-KW"/>
</dbReference>
<dbReference type="GO" id="GO:0030259">
    <property type="term" value="P:lipid glycosylation"/>
    <property type="evidence" value="ECO:0007669"/>
    <property type="project" value="UniProtKB-UniRule"/>
</dbReference>
<dbReference type="GO" id="GO:0009252">
    <property type="term" value="P:peptidoglycan biosynthetic process"/>
    <property type="evidence" value="ECO:0007669"/>
    <property type="project" value="UniProtKB-UniRule"/>
</dbReference>
<dbReference type="GO" id="GO:0008360">
    <property type="term" value="P:regulation of cell shape"/>
    <property type="evidence" value="ECO:0007669"/>
    <property type="project" value="UniProtKB-KW"/>
</dbReference>
<dbReference type="CDD" id="cd03785">
    <property type="entry name" value="GT28_MurG"/>
    <property type="match status" value="1"/>
</dbReference>
<dbReference type="Gene3D" id="3.40.50.2000">
    <property type="entry name" value="Glycogen Phosphorylase B"/>
    <property type="match status" value="2"/>
</dbReference>
<dbReference type="HAMAP" id="MF_00033">
    <property type="entry name" value="MurG"/>
    <property type="match status" value="1"/>
</dbReference>
<dbReference type="InterPro" id="IPR006009">
    <property type="entry name" value="GlcNAc_MurG"/>
</dbReference>
<dbReference type="InterPro" id="IPR007235">
    <property type="entry name" value="Glyco_trans_28_C"/>
</dbReference>
<dbReference type="InterPro" id="IPR004276">
    <property type="entry name" value="GlycoTrans_28_N"/>
</dbReference>
<dbReference type="NCBIfam" id="TIGR01133">
    <property type="entry name" value="murG"/>
    <property type="match status" value="1"/>
</dbReference>
<dbReference type="PANTHER" id="PTHR21015:SF22">
    <property type="entry name" value="GLYCOSYLTRANSFERASE"/>
    <property type="match status" value="1"/>
</dbReference>
<dbReference type="PANTHER" id="PTHR21015">
    <property type="entry name" value="UDP-N-ACETYLGLUCOSAMINE--N-ACETYLMURAMYL-(PENTAPEPTIDE) PYROPHOSPHORYL-UNDECAPRENOL N-ACETYLGLUCOSAMINE TRANSFERASE 1"/>
    <property type="match status" value="1"/>
</dbReference>
<dbReference type="Pfam" id="PF04101">
    <property type="entry name" value="Glyco_tran_28_C"/>
    <property type="match status" value="1"/>
</dbReference>
<dbReference type="Pfam" id="PF03033">
    <property type="entry name" value="Glyco_transf_28"/>
    <property type="match status" value="1"/>
</dbReference>
<dbReference type="SUPFAM" id="SSF53756">
    <property type="entry name" value="UDP-Glycosyltransferase/glycogen phosphorylase"/>
    <property type="match status" value="1"/>
</dbReference>